<keyword id="KW-0028">Amino-acid biosynthesis</keyword>
<keyword id="KW-0055">Arginine biosynthesis</keyword>
<keyword id="KW-0067">ATP-binding</keyword>
<keyword id="KW-0436">Ligase</keyword>
<keyword id="KW-0460">Magnesium</keyword>
<keyword id="KW-0464">Manganese</keyword>
<keyword id="KW-0479">Metal-binding</keyword>
<keyword id="KW-0547">Nucleotide-binding</keyword>
<keyword id="KW-0665">Pyrimidine biosynthesis</keyword>
<keyword id="KW-0677">Repeat</keyword>
<gene>
    <name evidence="1" type="primary">carB</name>
    <name type="ordered locus">Bsph_1464</name>
</gene>
<sequence length="1065" mass="117316">MPKRTDIETILVIGSGPIVIGQAAEFDYAGTQACLSLKEEGYRVILINSNPATIMTDTEIADKVYIEPISLDFVSRILRKERPDAILPTLGGQTGLNMAIELDKSGILDELGIEILGTKLDAIHKAEDRDLFRNLMYELGAPVPESDIIHSLDEAKRFVVKIGYPVIVRPAFTLGGTGGGICYNDQDLEEIVTSGLKYSPVTQCLLEKSIAGYKEIEYEVMRDAVDNAIVVCNMENVDPVGIHTGDSIVVAPTQTLSDRENQMLRNISLDIIRALKIEGGCNVQLALDPYSFNYYVIEVNPRVSRSSALASKATGYPIAKLAAKIAVGLTLDEIKNPVTGSTYACFEPALDYIVAKIPRWPFDKFESAKRNLGTQMKATGEVMALGRTFEEAMLKAVRSLETGQVHLELKHAEDNSDSWIEKRIRKAGDERLFFIGEALRRGVTIEQIHEWSAIDLFFLNKFKNIVDMEQTLADHKNDKEVLRTAKRLGFADKKIAELWDTTEEAIYAYRKEQGIIPVYKMVDTCAAEFESETPYFYGTYEEENESIKSEKPSVVVLGSGPIRIGQGVEFDYATVHSVWAIQEAGYEAIIINSNPETVSTDFSISDKLYFEPLTIEDVMHIIDLEQPIGVVVQFGGQTAINLADKLAANGVKILGTSLEDIDRAENRDKFEQALRDLNIPQPQGETAVSTVEALAIGERLGFPVLVRPSYVLGGRAMEIVYNQEELQHYMENAVEASPDHPVLVDRYLTGQEIEVDAICDGEHVLIPGIMEHIERAGVHSGDSISVYPPQKLTQYQKDTLVDYTTRLAKGLGIVGLMNIQYVISQGEVYVIEVNPRSSRTVPFLSKITNIPMANIATKAILGKSIVEQGYPTGLAPEQKGVFVKVPVFSFAKLRRVDITLGPEMKSTGEVMGKDATLEKALYKGLVAAGMEIRTEGTVLFTVSDKDKEEAIALAKRFSTVGYRIVATEGTAKAFEAAGVRTDVVGKIGAKGQTLIDLIQNGEAQLVVNTLTKGKQPARDGFRIRRESVENGVPCLTSLDTAEAMVRVIESMTFTAEEMPKAEVVH</sequence>
<name>CARB_LYSSC</name>
<accession>B1HQC1</accession>
<reference key="1">
    <citation type="journal article" date="2008" name="J. Bacteriol.">
        <title>Complete genome sequence of the mosquitocidal bacterium Bacillus sphaericus C3-41 and comparison with those of closely related Bacillus species.</title>
        <authorList>
            <person name="Hu X."/>
            <person name="Fan W."/>
            <person name="Han B."/>
            <person name="Liu H."/>
            <person name="Zheng D."/>
            <person name="Li Q."/>
            <person name="Dong W."/>
            <person name="Yan J."/>
            <person name="Gao M."/>
            <person name="Berry C."/>
            <person name="Yuan Z."/>
        </authorList>
    </citation>
    <scope>NUCLEOTIDE SEQUENCE [LARGE SCALE GENOMIC DNA]</scope>
    <source>
        <strain>C3-41</strain>
    </source>
</reference>
<dbReference type="EC" id="6.3.4.16" evidence="1"/>
<dbReference type="EC" id="6.3.5.5" evidence="1"/>
<dbReference type="EMBL" id="CP000817">
    <property type="protein sequence ID" value="ACA39068.1"/>
    <property type="molecule type" value="Genomic_DNA"/>
</dbReference>
<dbReference type="RefSeq" id="WP_012293187.1">
    <property type="nucleotide sequence ID" value="NC_010382.1"/>
</dbReference>
<dbReference type="SMR" id="B1HQC1"/>
<dbReference type="EnsemblBacteria" id="ACA39068">
    <property type="protein sequence ID" value="ACA39068"/>
    <property type="gene ID" value="Bsph_1464"/>
</dbReference>
<dbReference type="KEGG" id="lsp:Bsph_1464"/>
<dbReference type="HOGENOM" id="CLU_000513_1_0_9"/>
<dbReference type="UniPathway" id="UPA00068">
    <property type="reaction ID" value="UER00171"/>
</dbReference>
<dbReference type="UniPathway" id="UPA00070">
    <property type="reaction ID" value="UER00115"/>
</dbReference>
<dbReference type="Proteomes" id="UP000002164">
    <property type="component" value="Chromosome"/>
</dbReference>
<dbReference type="GO" id="GO:0005737">
    <property type="term" value="C:cytoplasm"/>
    <property type="evidence" value="ECO:0007669"/>
    <property type="project" value="TreeGrafter"/>
</dbReference>
<dbReference type="GO" id="GO:0005524">
    <property type="term" value="F:ATP binding"/>
    <property type="evidence" value="ECO:0007669"/>
    <property type="project" value="UniProtKB-UniRule"/>
</dbReference>
<dbReference type="GO" id="GO:0004087">
    <property type="term" value="F:carbamoyl-phosphate synthase (ammonia) activity"/>
    <property type="evidence" value="ECO:0007669"/>
    <property type="project" value="RHEA"/>
</dbReference>
<dbReference type="GO" id="GO:0004088">
    <property type="term" value="F:carbamoyl-phosphate synthase (glutamine-hydrolyzing) activity"/>
    <property type="evidence" value="ECO:0007669"/>
    <property type="project" value="UniProtKB-UniRule"/>
</dbReference>
<dbReference type="GO" id="GO:0046872">
    <property type="term" value="F:metal ion binding"/>
    <property type="evidence" value="ECO:0007669"/>
    <property type="project" value="UniProtKB-KW"/>
</dbReference>
<dbReference type="GO" id="GO:0044205">
    <property type="term" value="P:'de novo' UMP biosynthetic process"/>
    <property type="evidence" value="ECO:0007669"/>
    <property type="project" value="UniProtKB-UniRule"/>
</dbReference>
<dbReference type="GO" id="GO:0006541">
    <property type="term" value="P:glutamine metabolic process"/>
    <property type="evidence" value="ECO:0007669"/>
    <property type="project" value="TreeGrafter"/>
</dbReference>
<dbReference type="GO" id="GO:0006526">
    <property type="term" value="P:L-arginine biosynthetic process"/>
    <property type="evidence" value="ECO:0007669"/>
    <property type="project" value="UniProtKB-UniRule"/>
</dbReference>
<dbReference type="CDD" id="cd01424">
    <property type="entry name" value="MGS_CPS_II"/>
    <property type="match status" value="1"/>
</dbReference>
<dbReference type="FunFam" id="1.10.1030.10:FF:000002">
    <property type="entry name" value="Carbamoyl-phosphate synthase large chain"/>
    <property type="match status" value="1"/>
</dbReference>
<dbReference type="FunFam" id="3.30.1490.20:FF:000001">
    <property type="entry name" value="Carbamoyl-phosphate synthase large chain"/>
    <property type="match status" value="1"/>
</dbReference>
<dbReference type="FunFam" id="3.30.470.20:FF:000001">
    <property type="entry name" value="Carbamoyl-phosphate synthase large chain"/>
    <property type="match status" value="1"/>
</dbReference>
<dbReference type="FunFam" id="3.30.470.20:FF:000026">
    <property type="entry name" value="Carbamoyl-phosphate synthase large chain"/>
    <property type="match status" value="1"/>
</dbReference>
<dbReference type="FunFam" id="3.40.50.1380:FF:000011">
    <property type="entry name" value="Carbamoyl-phosphate synthase large chain"/>
    <property type="match status" value="1"/>
</dbReference>
<dbReference type="FunFam" id="3.40.50.20:FF:000001">
    <property type="entry name" value="Carbamoyl-phosphate synthase large chain"/>
    <property type="match status" value="2"/>
</dbReference>
<dbReference type="Gene3D" id="3.40.50.20">
    <property type="match status" value="2"/>
</dbReference>
<dbReference type="Gene3D" id="3.30.1490.20">
    <property type="entry name" value="ATP-grasp fold, A domain"/>
    <property type="match status" value="1"/>
</dbReference>
<dbReference type="Gene3D" id="3.30.470.20">
    <property type="entry name" value="ATP-grasp fold, B domain"/>
    <property type="match status" value="2"/>
</dbReference>
<dbReference type="Gene3D" id="1.10.1030.10">
    <property type="entry name" value="Carbamoyl-phosphate synthetase, large subunit oligomerisation domain"/>
    <property type="match status" value="1"/>
</dbReference>
<dbReference type="Gene3D" id="3.40.50.1380">
    <property type="entry name" value="Methylglyoxal synthase-like domain"/>
    <property type="match status" value="1"/>
</dbReference>
<dbReference type="HAMAP" id="MF_01210_A">
    <property type="entry name" value="CPSase_L_chain_A"/>
    <property type="match status" value="1"/>
</dbReference>
<dbReference type="HAMAP" id="MF_01210_B">
    <property type="entry name" value="CPSase_L_chain_B"/>
    <property type="match status" value="1"/>
</dbReference>
<dbReference type="InterPro" id="IPR011761">
    <property type="entry name" value="ATP-grasp"/>
</dbReference>
<dbReference type="InterPro" id="IPR013815">
    <property type="entry name" value="ATP_grasp_subdomain_1"/>
</dbReference>
<dbReference type="InterPro" id="IPR006275">
    <property type="entry name" value="CarbamoylP_synth_lsu"/>
</dbReference>
<dbReference type="InterPro" id="IPR005480">
    <property type="entry name" value="CarbamoylP_synth_lsu_oligo"/>
</dbReference>
<dbReference type="InterPro" id="IPR036897">
    <property type="entry name" value="CarbamoylP_synth_lsu_oligo_sf"/>
</dbReference>
<dbReference type="InterPro" id="IPR005479">
    <property type="entry name" value="CbamoylP_synth_lsu-like_ATP-bd"/>
</dbReference>
<dbReference type="InterPro" id="IPR005483">
    <property type="entry name" value="CbamoylP_synth_lsu_CPSase_dom"/>
</dbReference>
<dbReference type="InterPro" id="IPR011607">
    <property type="entry name" value="MGS-like_dom"/>
</dbReference>
<dbReference type="InterPro" id="IPR036914">
    <property type="entry name" value="MGS-like_dom_sf"/>
</dbReference>
<dbReference type="InterPro" id="IPR033937">
    <property type="entry name" value="MGS_CPS_CarB"/>
</dbReference>
<dbReference type="InterPro" id="IPR016185">
    <property type="entry name" value="PreATP-grasp_dom_sf"/>
</dbReference>
<dbReference type="NCBIfam" id="TIGR01369">
    <property type="entry name" value="CPSaseII_lrg"/>
    <property type="match status" value="1"/>
</dbReference>
<dbReference type="NCBIfam" id="NF003671">
    <property type="entry name" value="PRK05294.1"/>
    <property type="match status" value="1"/>
</dbReference>
<dbReference type="NCBIfam" id="NF009455">
    <property type="entry name" value="PRK12815.1"/>
    <property type="match status" value="1"/>
</dbReference>
<dbReference type="PANTHER" id="PTHR11405:SF53">
    <property type="entry name" value="CARBAMOYL-PHOSPHATE SYNTHASE [AMMONIA], MITOCHONDRIAL"/>
    <property type="match status" value="1"/>
</dbReference>
<dbReference type="PANTHER" id="PTHR11405">
    <property type="entry name" value="CARBAMOYLTRANSFERASE FAMILY MEMBER"/>
    <property type="match status" value="1"/>
</dbReference>
<dbReference type="Pfam" id="PF02786">
    <property type="entry name" value="CPSase_L_D2"/>
    <property type="match status" value="2"/>
</dbReference>
<dbReference type="Pfam" id="PF02787">
    <property type="entry name" value="CPSase_L_D3"/>
    <property type="match status" value="1"/>
</dbReference>
<dbReference type="Pfam" id="PF02142">
    <property type="entry name" value="MGS"/>
    <property type="match status" value="1"/>
</dbReference>
<dbReference type="PRINTS" id="PR00098">
    <property type="entry name" value="CPSASE"/>
</dbReference>
<dbReference type="SMART" id="SM01096">
    <property type="entry name" value="CPSase_L_D3"/>
    <property type="match status" value="1"/>
</dbReference>
<dbReference type="SMART" id="SM00851">
    <property type="entry name" value="MGS"/>
    <property type="match status" value="1"/>
</dbReference>
<dbReference type="SUPFAM" id="SSF48108">
    <property type="entry name" value="Carbamoyl phosphate synthetase, large subunit connection domain"/>
    <property type="match status" value="1"/>
</dbReference>
<dbReference type="SUPFAM" id="SSF56059">
    <property type="entry name" value="Glutathione synthetase ATP-binding domain-like"/>
    <property type="match status" value="2"/>
</dbReference>
<dbReference type="SUPFAM" id="SSF52335">
    <property type="entry name" value="Methylglyoxal synthase-like"/>
    <property type="match status" value="1"/>
</dbReference>
<dbReference type="SUPFAM" id="SSF52440">
    <property type="entry name" value="PreATP-grasp domain"/>
    <property type="match status" value="2"/>
</dbReference>
<dbReference type="PROSITE" id="PS50975">
    <property type="entry name" value="ATP_GRASP"/>
    <property type="match status" value="2"/>
</dbReference>
<dbReference type="PROSITE" id="PS00866">
    <property type="entry name" value="CPSASE_1"/>
    <property type="match status" value="2"/>
</dbReference>
<dbReference type="PROSITE" id="PS00867">
    <property type="entry name" value="CPSASE_2"/>
    <property type="match status" value="2"/>
</dbReference>
<dbReference type="PROSITE" id="PS51855">
    <property type="entry name" value="MGS"/>
    <property type="match status" value="1"/>
</dbReference>
<proteinExistence type="inferred from homology"/>
<evidence type="ECO:0000255" key="1">
    <source>
        <dbReference type="HAMAP-Rule" id="MF_01210"/>
    </source>
</evidence>
<protein>
    <recommendedName>
        <fullName evidence="1">Carbamoyl phosphate synthase large chain</fullName>
        <ecNumber evidence="1">6.3.4.16</ecNumber>
        <ecNumber evidence="1">6.3.5.5</ecNumber>
    </recommendedName>
    <alternativeName>
        <fullName evidence="1">Carbamoyl phosphate synthetase ammonia chain</fullName>
    </alternativeName>
</protein>
<comment type="function">
    <text evidence="1">Large subunit of the glutamine-dependent carbamoyl phosphate synthetase (CPSase). CPSase catalyzes the formation of carbamoyl phosphate from the ammonia moiety of glutamine, carbonate, and phosphate donated by ATP, constituting the first step of 2 biosynthetic pathways, one leading to arginine and/or urea and the other to pyrimidine nucleotides. The large subunit (synthetase) binds the substrates ammonia (free or transferred from glutamine from the small subunit), hydrogencarbonate and ATP and carries out an ATP-coupled ligase reaction, activating hydrogencarbonate by forming carboxy phosphate which reacts with ammonia to form carbamoyl phosphate.</text>
</comment>
<comment type="catalytic activity">
    <reaction evidence="1">
        <text>hydrogencarbonate + L-glutamine + 2 ATP + H2O = carbamoyl phosphate + L-glutamate + 2 ADP + phosphate + 2 H(+)</text>
        <dbReference type="Rhea" id="RHEA:18633"/>
        <dbReference type="ChEBI" id="CHEBI:15377"/>
        <dbReference type="ChEBI" id="CHEBI:15378"/>
        <dbReference type="ChEBI" id="CHEBI:17544"/>
        <dbReference type="ChEBI" id="CHEBI:29985"/>
        <dbReference type="ChEBI" id="CHEBI:30616"/>
        <dbReference type="ChEBI" id="CHEBI:43474"/>
        <dbReference type="ChEBI" id="CHEBI:58228"/>
        <dbReference type="ChEBI" id="CHEBI:58359"/>
        <dbReference type="ChEBI" id="CHEBI:456216"/>
        <dbReference type="EC" id="6.3.5.5"/>
    </reaction>
</comment>
<comment type="catalytic activity">
    <molecule>Carbamoyl phosphate synthase large chain</molecule>
    <reaction evidence="1">
        <text>hydrogencarbonate + NH4(+) + 2 ATP = carbamoyl phosphate + 2 ADP + phosphate + 2 H(+)</text>
        <dbReference type="Rhea" id="RHEA:18029"/>
        <dbReference type="ChEBI" id="CHEBI:15378"/>
        <dbReference type="ChEBI" id="CHEBI:17544"/>
        <dbReference type="ChEBI" id="CHEBI:28938"/>
        <dbReference type="ChEBI" id="CHEBI:30616"/>
        <dbReference type="ChEBI" id="CHEBI:43474"/>
        <dbReference type="ChEBI" id="CHEBI:58228"/>
        <dbReference type="ChEBI" id="CHEBI:456216"/>
        <dbReference type="EC" id="6.3.4.16"/>
    </reaction>
</comment>
<comment type="cofactor">
    <cofactor evidence="1">
        <name>Mg(2+)</name>
        <dbReference type="ChEBI" id="CHEBI:18420"/>
    </cofactor>
    <cofactor evidence="1">
        <name>Mn(2+)</name>
        <dbReference type="ChEBI" id="CHEBI:29035"/>
    </cofactor>
    <text evidence="1">Binds 4 Mg(2+) or Mn(2+) ions per subunit.</text>
</comment>
<comment type="pathway">
    <text evidence="1">Amino-acid biosynthesis; L-arginine biosynthesis; carbamoyl phosphate from bicarbonate: step 1/1.</text>
</comment>
<comment type="pathway">
    <text evidence="1">Pyrimidine metabolism; UMP biosynthesis via de novo pathway; (S)-dihydroorotate from bicarbonate: step 1/3.</text>
</comment>
<comment type="subunit">
    <text evidence="1">Composed of two chains; the small (or glutamine) chain promotes the hydrolysis of glutamine to ammonia, which is used by the large (or ammonia) chain to synthesize carbamoyl phosphate. Tetramer of heterodimers (alpha,beta)4.</text>
</comment>
<comment type="domain">
    <text evidence="1">The large subunit is composed of 2 ATP-grasp domains that are involved in binding the 2 ATP molecules needed for carbamoyl phosphate synthesis. The N-terminal ATP-grasp domain (referred to as the carboxyphosphate synthetic component) catalyzes the ATP-dependent phosphorylation of hydrogencarbonate to carboxyphosphate and the subsequent nucleophilic attack by ammonia to form a carbamate intermediate. The C-terminal ATP-grasp domain (referred to as the carbamoyl phosphate synthetic component) then catalyzes the phosphorylation of carbamate with the second ATP to form the end product carbamoyl phosphate. The reactive and unstable enzyme intermediates are sequentially channeled from one active site to the next through the interior of the protein over a distance of at least 96 A.</text>
</comment>
<comment type="similarity">
    <text evidence="1">Belongs to the CarB family.</text>
</comment>
<feature type="chain" id="PRO_1000138896" description="Carbamoyl phosphate synthase large chain">
    <location>
        <begin position="1"/>
        <end position="1065"/>
    </location>
</feature>
<feature type="domain" description="ATP-grasp 1" evidence="1">
    <location>
        <begin position="133"/>
        <end position="327"/>
    </location>
</feature>
<feature type="domain" description="ATP-grasp 2" evidence="1">
    <location>
        <begin position="671"/>
        <end position="861"/>
    </location>
</feature>
<feature type="domain" description="MGS-like" evidence="1">
    <location>
        <begin position="930"/>
        <end position="1065"/>
    </location>
</feature>
<feature type="region of interest" description="Carboxyphosphate synthetic domain" evidence="1">
    <location>
        <begin position="1"/>
        <end position="401"/>
    </location>
</feature>
<feature type="region of interest" description="Oligomerization domain" evidence="1">
    <location>
        <begin position="402"/>
        <end position="546"/>
    </location>
</feature>
<feature type="region of interest" description="Carbamoyl phosphate synthetic domain" evidence="1">
    <location>
        <begin position="547"/>
        <end position="929"/>
    </location>
</feature>
<feature type="region of interest" description="Allosteric domain" evidence="1">
    <location>
        <begin position="930"/>
        <end position="1065"/>
    </location>
</feature>
<feature type="binding site" evidence="1">
    <location>
        <position position="129"/>
    </location>
    <ligand>
        <name>ATP</name>
        <dbReference type="ChEBI" id="CHEBI:30616"/>
        <label>1</label>
    </ligand>
</feature>
<feature type="binding site" evidence="1">
    <location>
        <position position="169"/>
    </location>
    <ligand>
        <name>ATP</name>
        <dbReference type="ChEBI" id="CHEBI:30616"/>
        <label>1</label>
    </ligand>
</feature>
<feature type="binding site" evidence="1">
    <location>
        <position position="175"/>
    </location>
    <ligand>
        <name>ATP</name>
        <dbReference type="ChEBI" id="CHEBI:30616"/>
        <label>1</label>
    </ligand>
</feature>
<feature type="binding site" evidence="1">
    <location>
        <position position="176"/>
    </location>
    <ligand>
        <name>ATP</name>
        <dbReference type="ChEBI" id="CHEBI:30616"/>
        <label>1</label>
    </ligand>
</feature>
<feature type="binding site" evidence="1">
    <location>
        <position position="208"/>
    </location>
    <ligand>
        <name>ATP</name>
        <dbReference type="ChEBI" id="CHEBI:30616"/>
        <label>1</label>
    </ligand>
</feature>
<feature type="binding site" evidence="1">
    <location>
        <position position="210"/>
    </location>
    <ligand>
        <name>ATP</name>
        <dbReference type="ChEBI" id="CHEBI:30616"/>
        <label>1</label>
    </ligand>
</feature>
<feature type="binding site" evidence="1">
    <location>
        <position position="215"/>
    </location>
    <ligand>
        <name>ATP</name>
        <dbReference type="ChEBI" id="CHEBI:30616"/>
        <label>1</label>
    </ligand>
</feature>
<feature type="binding site" evidence="1">
    <location>
        <position position="241"/>
    </location>
    <ligand>
        <name>ATP</name>
        <dbReference type="ChEBI" id="CHEBI:30616"/>
        <label>1</label>
    </ligand>
</feature>
<feature type="binding site" evidence="1">
    <location>
        <position position="242"/>
    </location>
    <ligand>
        <name>ATP</name>
        <dbReference type="ChEBI" id="CHEBI:30616"/>
        <label>1</label>
    </ligand>
</feature>
<feature type="binding site" evidence="1">
    <location>
        <position position="243"/>
    </location>
    <ligand>
        <name>ATP</name>
        <dbReference type="ChEBI" id="CHEBI:30616"/>
        <label>1</label>
    </ligand>
</feature>
<feature type="binding site" evidence="1">
    <location>
        <position position="284"/>
    </location>
    <ligand>
        <name>ATP</name>
        <dbReference type="ChEBI" id="CHEBI:30616"/>
        <label>1</label>
    </ligand>
</feature>
<feature type="binding site" evidence="1">
    <location>
        <position position="284"/>
    </location>
    <ligand>
        <name>Mg(2+)</name>
        <dbReference type="ChEBI" id="CHEBI:18420"/>
        <label>1</label>
    </ligand>
</feature>
<feature type="binding site" evidence="1">
    <location>
        <position position="284"/>
    </location>
    <ligand>
        <name>Mn(2+)</name>
        <dbReference type="ChEBI" id="CHEBI:29035"/>
        <label>1</label>
    </ligand>
</feature>
<feature type="binding site" evidence="1">
    <location>
        <position position="298"/>
    </location>
    <ligand>
        <name>ATP</name>
        <dbReference type="ChEBI" id="CHEBI:30616"/>
        <label>1</label>
    </ligand>
</feature>
<feature type="binding site" evidence="1">
    <location>
        <position position="298"/>
    </location>
    <ligand>
        <name>Mg(2+)</name>
        <dbReference type="ChEBI" id="CHEBI:18420"/>
        <label>1</label>
    </ligand>
</feature>
<feature type="binding site" evidence="1">
    <location>
        <position position="298"/>
    </location>
    <ligand>
        <name>Mg(2+)</name>
        <dbReference type="ChEBI" id="CHEBI:18420"/>
        <label>2</label>
    </ligand>
</feature>
<feature type="binding site" evidence="1">
    <location>
        <position position="298"/>
    </location>
    <ligand>
        <name>Mn(2+)</name>
        <dbReference type="ChEBI" id="CHEBI:29035"/>
        <label>1</label>
    </ligand>
</feature>
<feature type="binding site" evidence="1">
    <location>
        <position position="298"/>
    </location>
    <ligand>
        <name>Mn(2+)</name>
        <dbReference type="ChEBI" id="CHEBI:29035"/>
        <label>2</label>
    </ligand>
</feature>
<feature type="binding site" evidence="1">
    <location>
        <position position="300"/>
    </location>
    <ligand>
        <name>Mg(2+)</name>
        <dbReference type="ChEBI" id="CHEBI:18420"/>
        <label>2</label>
    </ligand>
</feature>
<feature type="binding site" evidence="1">
    <location>
        <position position="300"/>
    </location>
    <ligand>
        <name>Mn(2+)</name>
        <dbReference type="ChEBI" id="CHEBI:29035"/>
        <label>2</label>
    </ligand>
</feature>
<feature type="binding site" evidence="1">
    <location>
        <position position="707"/>
    </location>
    <ligand>
        <name>ATP</name>
        <dbReference type="ChEBI" id="CHEBI:30616"/>
        <label>2</label>
    </ligand>
</feature>
<feature type="binding site" evidence="1">
    <location>
        <position position="746"/>
    </location>
    <ligand>
        <name>ATP</name>
        <dbReference type="ChEBI" id="CHEBI:30616"/>
        <label>2</label>
    </ligand>
</feature>
<feature type="binding site" evidence="1">
    <location>
        <position position="748"/>
    </location>
    <ligand>
        <name>ATP</name>
        <dbReference type="ChEBI" id="CHEBI:30616"/>
        <label>2</label>
    </ligand>
</feature>
<feature type="binding site" evidence="1">
    <location>
        <position position="752"/>
    </location>
    <ligand>
        <name>ATP</name>
        <dbReference type="ChEBI" id="CHEBI:30616"/>
        <label>2</label>
    </ligand>
</feature>
<feature type="binding site" evidence="1">
    <location>
        <position position="777"/>
    </location>
    <ligand>
        <name>ATP</name>
        <dbReference type="ChEBI" id="CHEBI:30616"/>
        <label>2</label>
    </ligand>
</feature>
<feature type="binding site" evidence="1">
    <location>
        <position position="778"/>
    </location>
    <ligand>
        <name>ATP</name>
        <dbReference type="ChEBI" id="CHEBI:30616"/>
        <label>2</label>
    </ligand>
</feature>
<feature type="binding site" evidence="1">
    <location>
        <position position="779"/>
    </location>
    <ligand>
        <name>ATP</name>
        <dbReference type="ChEBI" id="CHEBI:30616"/>
        <label>2</label>
    </ligand>
</feature>
<feature type="binding site" evidence="1">
    <location>
        <position position="780"/>
    </location>
    <ligand>
        <name>ATP</name>
        <dbReference type="ChEBI" id="CHEBI:30616"/>
        <label>2</label>
    </ligand>
</feature>
<feature type="binding site" evidence="1">
    <location>
        <position position="820"/>
    </location>
    <ligand>
        <name>ATP</name>
        <dbReference type="ChEBI" id="CHEBI:30616"/>
        <label>2</label>
    </ligand>
</feature>
<feature type="binding site" evidence="1">
    <location>
        <position position="820"/>
    </location>
    <ligand>
        <name>Mg(2+)</name>
        <dbReference type="ChEBI" id="CHEBI:18420"/>
        <label>3</label>
    </ligand>
</feature>
<feature type="binding site" evidence="1">
    <location>
        <position position="820"/>
    </location>
    <ligand>
        <name>Mn(2+)</name>
        <dbReference type="ChEBI" id="CHEBI:29035"/>
        <label>3</label>
    </ligand>
</feature>
<feature type="binding site" evidence="1">
    <location>
        <position position="832"/>
    </location>
    <ligand>
        <name>ATP</name>
        <dbReference type="ChEBI" id="CHEBI:30616"/>
        <label>2</label>
    </ligand>
</feature>
<feature type="binding site" evidence="1">
    <location>
        <position position="832"/>
    </location>
    <ligand>
        <name>Mg(2+)</name>
        <dbReference type="ChEBI" id="CHEBI:18420"/>
        <label>3</label>
    </ligand>
</feature>
<feature type="binding site" evidence="1">
    <location>
        <position position="832"/>
    </location>
    <ligand>
        <name>Mg(2+)</name>
        <dbReference type="ChEBI" id="CHEBI:18420"/>
        <label>4</label>
    </ligand>
</feature>
<feature type="binding site" evidence="1">
    <location>
        <position position="832"/>
    </location>
    <ligand>
        <name>Mn(2+)</name>
        <dbReference type="ChEBI" id="CHEBI:29035"/>
        <label>3</label>
    </ligand>
</feature>
<feature type="binding site" evidence="1">
    <location>
        <position position="832"/>
    </location>
    <ligand>
        <name>Mn(2+)</name>
        <dbReference type="ChEBI" id="CHEBI:29035"/>
        <label>4</label>
    </ligand>
</feature>
<feature type="binding site" evidence="1">
    <location>
        <position position="834"/>
    </location>
    <ligand>
        <name>Mg(2+)</name>
        <dbReference type="ChEBI" id="CHEBI:18420"/>
        <label>4</label>
    </ligand>
</feature>
<feature type="binding site" evidence="1">
    <location>
        <position position="834"/>
    </location>
    <ligand>
        <name>Mn(2+)</name>
        <dbReference type="ChEBI" id="CHEBI:29035"/>
        <label>4</label>
    </ligand>
</feature>
<organism>
    <name type="scientific">Lysinibacillus sphaericus (strain C3-41)</name>
    <dbReference type="NCBI Taxonomy" id="444177"/>
    <lineage>
        <taxon>Bacteria</taxon>
        <taxon>Bacillati</taxon>
        <taxon>Bacillota</taxon>
        <taxon>Bacilli</taxon>
        <taxon>Bacillales</taxon>
        <taxon>Bacillaceae</taxon>
        <taxon>Lysinibacillus</taxon>
    </lineage>
</organism>